<proteinExistence type="inferred from homology"/>
<keyword id="KW-0687">Ribonucleoprotein</keyword>
<keyword id="KW-0689">Ribosomal protein</keyword>
<name>RS16_NEOSM</name>
<accession>Q2GES3</accession>
<comment type="similarity">
    <text evidence="1">Belongs to the bacterial ribosomal protein bS16 family.</text>
</comment>
<feature type="chain" id="PRO_0000243834" description="Small ribosomal subunit protein bS16">
    <location>
        <begin position="1"/>
        <end position="85"/>
    </location>
</feature>
<organism>
    <name type="scientific">Neorickettsia sennetsu (strain ATCC VR-367 / Miyayama)</name>
    <name type="common">Ehrlichia sennetsu</name>
    <dbReference type="NCBI Taxonomy" id="222891"/>
    <lineage>
        <taxon>Bacteria</taxon>
        <taxon>Pseudomonadati</taxon>
        <taxon>Pseudomonadota</taxon>
        <taxon>Alphaproteobacteria</taxon>
        <taxon>Rickettsiales</taxon>
        <taxon>Anaplasmataceae</taxon>
        <taxon>Neorickettsia</taxon>
    </lineage>
</organism>
<dbReference type="EMBL" id="CP000237">
    <property type="protein sequence ID" value="ABD46222.1"/>
    <property type="molecule type" value="Genomic_DNA"/>
</dbReference>
<dbReference type="SMR" id="Q2GES3"/>
<dbReference type="STRING" id="222891.NSE_0123"/>
<dbReference type="KEGG" id="nse:NSE_0123"/>
<dbReference type="eggNOG" id="COG0228">
    <property type="taxonomic scope" value="Bacteria"/>
</dbReference>
<dbReference type="HOGENOM" id="CLU_100590_5_0_5"/>
<dbReference type="OrthoDB" id="9807878at2"/>
<dbReference type="Proteomes" id="UP000001942">
    <property type="component" value="Chromosome"/>
</dbReference>
<dbReference type="GO" id="GO:0005737">
    <property type="term" value="C:cytoplasm"/>
    <property type="evidence" value="ECO:0007669"/>
    <property type="project" value="UniProtKB-ARBA"/>
</dbReference>
<dbReference type="GO" id="GO:0015935">
    <property type="term" value="C:small ribosomal subunit"/>
    <property type="evidence" value="ECO:0007669"/>
    <property type="project" value="TreeGrafter"/>
</dbReference>
<dbReference type="GO" id="GO:0003735">
    <property type="term" value="F:structural constituent of ribosome"/>
    <property type="evidence" value="ECO:0007669"/>
    <property type="project" value="InterPro"/>
</dbReference>
<dbReference type="GO" id="GO:0006412">
    <property type="term" value="P:translation"/>
    <property type="evidence" value="ECO:0007669"/>
    <property type="project" value="UniProtKB-UniRule"/>
</dbReference>
<dbReference type="Gene3D" id="3.30.1320.10">
    <property type="match status" value="1"/>
</dbReference>
<dbReference type="HAMAP" id="MF_00385">
    <property type="entry name" value="Ribosomal_bS16"/>
    <property type="match status" value="1"/>
</dbReference>
<dbReference type="InterPro" id="IPR000307">
    <property type="entry name" value="Ribosomal_bS16"/>
</dbReference>
<dbReference type="InterPro" id="IPR020592">
    <property type="entry name" value="Ribosomal_bS16_CS"/>
</dbReference>
<dbReference type="InterPro" id="IPR023803">
    <property type="entry name" value="Ribosomal_bS16_dom_sf"/>
</dbReference>
<dbReference type="NCBIfam" id="TIGR00002">
    <property type="entry name" value="S16"/>
    <property type="match status" value="1"/>
</dbReference>
<dbReference type="PANTHER" id="PTHR12919">
    <property type="entry name" value="30S RIBOSOMAL PROTEIN S16"/>
    <property type="match status" value="1"/>
</dbReference>
<dbReference type="PANTHER" id="PTHR12919:SF20">
    <property type="entry name" value="SMALL RIBOSOMAL SUBUNIT PROTEIN BS16M"/>
    <property type="match status" value="1"/>
</dbReference>
<dbReference type="Pfam" id="PF00886">
    <property type="entry name" value="Ribosomal_S16"/>
    <property type="match status" value="1"/>
</dbReference>
<dbReference type="SUPFAM" id="SSF54565">
    <property type="entry name" value="Ribosomal protein S16"/>
    <property type="match status" value="1"/>
</dbReference>
<dbReference type="PROSITE" id="PS00732">
    <property type="entry name" value="RIBOSOMAL_S16"/>
    <property type="match status" value="1"/>
</dbReference>
<protein>
    <recommendedName>
        <fullName evidence="1">Small ribosomal subunit protein bS16</fullName>
    </recommendedName>
    <alternativeName>
        <fullName evidence="2">30S ribosomal protein S16</fullName>
    </alternativeName>
</protein>
<sequence>MYYLLFMLKIRLARFGRKKRPYYKIVVANSSSPRDGKFLEQVGSYDPLLSKDDPLRVCLDIERIRYWTSVGAKPTERVAKFVACL</sequence>
<evidence type="ECO:0000255" key="1">
    <source>
        <dbReference type="HAMAP-Rule" id="MF_00385"/>
    </source>
</evidence>
<evidence type="ECO:0000305" key="2"/>
<reference key="1">
    <citation type="journal article" date="2006" name="PLoS Genet.">
        <title>Comparative genomics of emerging human ehrlichiosis agents.</title>
        <authorList>
            <person name="Dunning Hotopp J.C."/>
            <person name="Lin M."/>
            <person name="Madupu R."/>
            <person name="Crabtree J."/>
            <person name="Angiuoli S.V."/>
            <person name="Eisen J.A."/>
            <person name="Seshadri R."/>
            <person name="Ren Q."/>
            <person name="Wu M."/>
            <person name="Utterback T.R."/>
            <person name="Smith S."/>
            <person name="Lewis M."/>
            <person name="Khouri H."/>
            <person name="Zhang C."/>
            <person name="Niu H."/>
            <person name="Lin Q."/>
            <person name="Ohashi N."/>
            <person name="Zhi N."/>
            <person name="Nelson W.C."/>
            <person name="Brinkac L.M."/>
            <person name="Dodson R.J."/>
            <person name="Rosovitz M.J."/>
            <person name="Sundaram J.P."/>
            <person name="Daugherty S.C."/>
            <person name="Davidsen T."/>
            <person name="Durkin A.S."/>
            <person name="Gwinn M.L."/>
            <person name="Haft D.H."/>
            <person name="Selengut J.D."/>
            <person name="Sullivan S.A."/>
            <person name="Zafar N."/>
            <person name="Zhou L."/>
            <person name="Benahmed F."/>
            <person name="Forberger H."/>
            <person name="Halpin R."/>
            <person name="Mulligan S."/>
            <person name="Robinson J."/>
            <person name="White O."/>
            <person name="Rikihisa Y."/>
            <person name="Tettelin H."/>
        </authorList>
    </citation>
    <scope>NUCLEOTIDE SEQUENCE [LARGE SCALE GENOMIC DNA]</scope>
    <source>
        <strain>ATCC VR-367 / Miyayama</strain>
    </source>
</reference>
<gene>
    <name evidence="1" type="primary">rpsP</name>
    <name type="ordered locus">NSE_0123</name>
</gene>